<comment type="function">
    <text evidence="2">Sulfur carrier protein involved in sulfur trafficking for oxidative dissimilatory sulfur metabolism. Component of a sulfur relay system that starts with the sulfur-mobilizing rhodanese-like protein Rhd_2599 (Alvin_2599), which transfers the sulfur from a low-molecular-weight thiol, maybe glutathione, to the TusA protein (Alvin_2600); TusA serves as the sulfur donor for DsrEFH, which persulfurates DsrC; persulfurated DsrC very probably serves as a direct substrate for reverse-acting sulfite reductase, DsrAB. Is able to catalyze the sulfur transfer reaction from thiosulfate or glutathione (GSSH) to cyanide in vitro, however, thiosulfate is unlikely an in vivo substrate.</text>
</comment>
<comment type="pathway">
    <text evidence="4">Energy metabolism; sulfur metabolism.</text>
</comment>
<comment type="subunit">
    <text evidence="2">Monomer.</text>
</comment>
<comment type="subcellular location">
    <subcellularLocation>
        <location evidence="4">Cytoplasm</location>
    </subcellularLocation>
</comment>
<comment type="induction">
    <text evidence="2">Up-regulated under sulfur-oxidizing conditions (at mRNA level), i.e. when grown on reduced sulfur compounds such as sulfide, thiosulfate or elemental sulfur.</text>
</comment>
<comment type="disruption phenotype">
    <text evidence="2">A mutant strain lacking rhd_2599, tusA and dsrE2, although not viable in liquid culture, is clearly sulfur oxidation negative upon growth on solid media containing sulfide, and shows massive accumulation of intercellular sulfur globules.</text>
</comment>
<reference key="1">
    <citation type="journal article" date="2011" name="Stand. Genomic Sci.">
        <title>Complete genome sequence of Allochromatium vinosum DSM 180(T).</title>
        <authorList>
            <person name="Weissgerber T."/>
            <person name="Zigann R."/>
            <person name="Bruce D."/>
            <person name="Chang Y.J."/>
            <person name="Detter J.C."/>
            <person name="Han C."/>
            <person name="Hauser L."/>
            <person name="Jeffries C.D."/>
            <person name="Land M."/>
            <person name="Munk A.C."/>
            <person name="Tapia R."/>
            <person name="Dahl C."/>
        </authorList>
    </citation>
    <scope>NUCLEOTIDE SEQUENCE [LARGE SCALE GENOMIC DNA]</scope>
    <source>
        <strain>ATCC 17899 / DSM 180 / NBRC 103801 / NCIMB 10441 / D</strain>
    </source>
</reference>
<reference key="2">
    <citation type="journal article" date="2014" name="J. Biol. Chem.">
        <title>New proteins involved in sulfur trafficking in the cytoplasm of Allochromatium vinosum.</title>
        <authorList>
            <person name="Stockdreher Y."/>
            <person name="Sturm M."/>
            <person name="Josten M."/>
            <person name="Sahl H.G."/>
            <person name="Dobler N."/>
            <person name="Zigann R."/>
            <person name="Dahl C."/>
        </authorList>
    </citation>
    <scope>FUNCTION</scope>
    <scope>CATALYTIC ACTIVITY</scope>
    <scope>SULFUR-BINDING</scope>
    <scope>INDUCTION</scope>
    <scope>DISRUPTION PHENOTYPE</scope>
    <scope>SUBCELLULAR LOCATION</scope>
    <scope>SUBUNIT</scope>
    <scope>PATHWAY</scope>
    <scope>ACTIVE SITE</scope>
    <scope>MUTAGENESIS OF CYS-64 AND CYS-74</scope>
    <source>
        <strain>ATCC 17899 / DSM 180 / NBRC 103801 / NCIMB 10441 / D</strain>
    </source>
</reference>
<organism>
    <name type="scientific">Allochromatium vinosum (strain ATCC 17899 / DSM 180 / NBRC 103801 / NCIMB 10441 / D)</name>
    <name type="common">Chromatium vinosum</name>
    <dbReference type="NCBI Taxonomy" id="572477"/>
    <lineage>
        <taxon>Bacteria</taxon>
        <taxon>Pseudomonadati</taxon>
        <taxon>Pseudomonadota</taxon>
        <taxon>Gammaproteobacteria</taxon>
        <taxon>Chromatiales</taxon>
        <taxon>Chromatiaceae</taxon>
        <taxon>Allochromatium</taxon>
    </lineage>
</organism>
<proteinExistence type="evidence at protein level"/>
<accession>D3RPB9</accession>
<name>RHODA_ALLVD</name>
<evidence type="ECO:0000255" key="1">
    <source>
        <dbReference type="PROSITE-ProRule" id="PRU00173"/>
    </source>
</evidence>
<evidence type="ECO:0000269" key="2">
    <source>
    </source>
</evidence>
<evidence type="ECO:0000303" key="3">
    <source>
    </source>
</evidence>
<evidence type="ECO:0000305" key="4">
    <source>
    </source>
</evidence>
<evidence type="ECO:0000312" key="5">
    <source>
        <dbReference type="EMBL" id="ADC63509.1"/>
    </source>
</evidence>
<gene>
    <name evidence="3" type="primary">rhd_2599</name>
    <name evidence="5" type="ordered locus">Alvin_2599</name>
</gene>
<keyword id="KW-0963">Cytoplasm</keyword>
<keyword id="KW-1185">Reference proteome</keyword>
<keyword id="KW-0808">Transferase</keyword>
<sequence length="107" mass="11860">MVNEIDSESLSQRLADTEDVLLVDIRTPAEIAQGMIPDALQLPMHLIPIRMSEIPKDRDVVIYCRSGARSYQACAYLMQQGYGRVLNLRGGIIAWARHGLPIVAPEG</sequence>
<dbReference type="EC" id="2.8.1.-" evidence="2"/>
<dbReference type="EMBL" id="CP001896">
    <property type="protein sequence ID" value="ADC63509.1"/>
    <property type="molecule type" value="Genomic_DNA"/>
</dbReference>
<dbReference type="RefSeq" id="WP_012971777.1">
    <property type="nucleotide sequence ID" value="NC_013851.1"/>
</dbReference>
<dbReference type="SMR" id="D3RPB9"/>
<dbReference type="STRING" id="572477.Alvin_2599"/>
<dbReference type="KEGG" id="alv:Alvin_2599"/>
<dbReference type="eggNOG" id="COG0607">
    <property type="taxonomic scope" value="Bacteria"/>
</dbReference>
<dbReference type="HOGENOM" id="CLU_089574_13_0_6"/>
<dbReference type="OrthoDB" id="9791096at2"/>
<dbReference type="BioCyc" id="MetaCyc:MONOMER-19177"/>
<dbReference type="UniPathway" id="UPA00096"/>
<dbReference type="Proteomes" id="UP000001441">
    <property type="component" value="Chromosome"/>
</dbReference>
<dbReference type="GO" id="GO:0005737">
    <property type="term" value="C:cytoplasm"/>
    <property type="evidence" value="ECO:0007669"/>
    <property type="project" value="UniProtKB-SubCell"/>
</dbReference>
<dbReference type="GO" id="GO:0016740">
    <property type="term" value="F:transferase activity"/>
    <property type="evidence" value="ECO:0007669"/>
    <property type="project" value="UniProtKB-KW"/>
</dbReference>
<dbReference type="GO" id="GO:0006790">
    <property type="term" value="P:sulfur compound metabolic process"/>
    <property type="evidence" value="ECO:0007669"/>
    <property type="project" value="UniProtKB-UniPathway"/>
</dbReference>
<dbReference type="CDD" id="cd00158">
    <property type="entry name" value="RHOD"/>
    <property type="match status" value="1"/>
</dbReference>
<dbReference type="Gene3D" id="3.40.250.10">
    <property type="entry name" value="Rhodanese-like domain"/>
    <property type="match status" value="1"/>
</dbReference>
<dbReference type="InterPro" id="IPR050229">
    <property type="entry name" value="GlpE_sulfurtransferase"/>
</dbReference>
<dbReference type="InterPro" id="IPR001763">
    <property type="entry name" value="Rhodanese-like_dom"/>
</dbReference>
<dbReference type="InterPro" id="IPR036873">
    <property type="entry name" value="Rhodanese-like_dom_sf"/>
</dbReference>
<dbReference type="PANTHER" id="PTHR43031">
    <property type="entry name" value="FAD-DEPENDENT OXIDOREDUCTASE"/>
    <property type="match status" value="1"/>
</dbReference>
<dbReference type="PANTHER" id="PTHR43031:SF1">
    <property type="entry name" value="PYRIDINE NUCLEOTIDE-DISULPHIDE OXIDOREDUCTASE"/>
    <property type="match status" value="1"/>
</dbReference>
<dbReference type="Pfam" id="PF00581">
    <property type="entry name" value="Rhodanese"/>
    <property type="match status" value="1"/>
</dbReference>
<dbReference type="SMART" id="SM00450">
    <property type="entry name" value="RHOD"/>
    <property type="match status" value="1"/>
</dbReference>
<dbReference type="SUPFAM" id="SSF52821">
    <property type="entry name" value="Rhodanese/Cell cycle control phosphatase"/>
    <property type="match status" value="1"/>
</dbReference>
<dbReference type="PROSITE" id="PS50206">
    <property type="entry name" value="RHODANESE_3"/>
    <property type="match status" value="1"/>
</dbReference>
<feature type="chain" id="PRO_0000439100" description="Sulfurtransferase Alvin_2599">
    <location>
        <begin position="1"/>
        <end position="107"/>
    </location>
</feature>
<feature type="domain" description="Rhodanese" evidence="1">
    <location>
        <begin position="16"/>
        <end position="104"/>
    </location>
</feature>
<feature type="active site" description="Cysteine persulfide intermediate" evidence="1 2">
    <location>
        <position position="64"/>
    </location>
</feature>
<feature type="mutagenesis site" description="Loss of sulfur binding in the presence of thiosulfate." evidence="2">
    <original>C</original>
    <variation>S</variation>
    <location>
        <position position="64"/>
    </location>
</feature>
<feature type="mutagenesis site" description="Still able to bind sulfur in the presence of thiosulfate." evidence="2">
    <original>C</original>
    <variation>S</variation>
    <location>
        <position position="74"/>
    </location>
</feature>
<protein>
    <recommendedName>
        <fullName evidence="4">Sulfurtransferase Alvin_2599</fullName>
        <ecNumber evidence="2">2.8.1.-</ecNumber>
    </recommendedName>
    <alternativeName>
        <fullName evidence="4">Sulfur-mobilizing rhodanese-like protein</fullName>
    </alternativeName>
</protein>